<organism>
    <name type="scientific">Paramecium tetraurelia</name>
    <dbReference type="NCBI Taxonomy" id="5888"/>
    <lineage>
        <taxon>Eukaryota</taxon>
        <taxon>Sar</taxon>
        <taxon>Alveolata</taxon>
        <taxon>Ciliophora</taxon>
        <taxon>Intramacronucleata</taxon>
        <taxon>Oligohymenophorea</taxon>
        <taxon>Peniculida</taxon>
        <taxon>Parameciidae</taxon>
        <taxon>Paramecium</taxon>
    </lineage>
</organism>
<sequence length="325" mass="36677">MEPTLKNILENPSLKWIFVGGKGGVGKTTTSSSLATLFAKSGKKTIIISTDPAHNLSDCFDQKIGGQPILIKGIDNLSAMEIDPTVDPDKLKLPTLQGFMNDQATKSLLSELISSVPGIDEAMSFAELMNSVDEMKYDLIIFDTAPTGHTLRLLNFPNIMEKGLNKLVQLRYNFQNLASQFQGLFGSQEEFDQQMNQMFSKIETMKDTVTKVNAQMKDKNKTTFIGVCIPEFLSMYETERLVQELTKFKIDIHNIVINQVLFPDDQCKMCNARAKMQKKYLDQMIDLYDDFHVVIMPLQENEVRGIDGLKQFCELLLKPKTVPQV</sequence>
<dbReference type="EC" id="3.6.-.-" evidence="1"/>
<dbReference type="EMBL" id="CT868661">
    <property type="protein sequence ID" value="CAK91172.1"/>
    <property type="molecule type" value="Genomic_DNA"/>
</dbReference>
<dbReference type="RefSeq" id="XP_001458569.1">
    <property type="nucleotide sequence ID" value="XM_001458532.2"/>
</dbReference>
<dbReference type="SMR" id="A0E7A5"/>
<dbReference type="FunCoup" id="A0E7A5">
    <property type="interactions" value="1122"/>
</dbReference>
<dbReference type="STRING" id="5888.A0E7A5"/>
<dbReference type="EnsemblProtists" id="CAK91172">
    <property type="protein sequence ID" value="CAK91172"/>
    <property type="gene ID" value="GSPATT00023900001"/>
</dbReference>
<dbReference type="GeneID" id="5044354"/>
<dbReference type="KEGG" id="ptm:GSPATT00023900001"/>
<dbReference type="eggNOG" id="KOG2825">
    <property type="taxonomic scope" value="Eukaryota"/>
</dbReference>
<dbReference type="HOGENOM" id="CLU_040761_0_0_1"/>
<dbReference type="InParanoid" id="A0E7A5"/>
<dbReference type="OMA" id="IGNNEPR"/>
<dbReference type="OrthoDB" id="1770at2759"/>
<dbReference type="Proteomes" id="UP000000600">
    <property type="component" value="Partially assembled WGS sequence"/>
</dbReference>
<dbReference type="GO" id="GO:0043529">
    <property type="term" value="C:GET complex"/>
    <property type="evidence" value="ECO:0000318"/>
    <property type="project" value="GO_Central"/>
</dbReference>
<dbReference type="GO" id="GO:0005524">
    <property type="term" value="F:ATP binding"/>
    <property type="evidence" value="ECO:0007669"/>
    <property type="project" value="UniProtKB-UniRule"/>
</dbReference>
<dbReference type="GO" id="GO:0016887">
    <property type="term" value="F:ATP hydrolysis activity"/>
    <property type="evidence" value="ECO:0000318"/>
    <property type="project" value="GO_Central"/>
</dbReference>
<dbReference type="GO" id="GO:0046872">
    <property type="term" value="F:metal ion binding"/>
    <property type="evidence" value="ECO:0007669"/>
    <property type="project" value="UniProtKB-KW"/>
</dbReference>
<dbReference type="GO" id="GO:0071816">
    <property type="term" value="P:tail-anchored membrane protein insertion into ER membrane"/>
    <property type="evidence" value="ECO:0000318"/>
    <property type="project" value="GO_Central"/>
</dbReference>
<dbReference type="CDD" id="cd02035">
    <property type="entry name" value="ArsA"/>
    <property type="match status" value="1"/>
</dbReference>
<dbReference type="FunFam" id="3.40.50.300:FF:001459">
    <property type="entry name" value="ATPase ASNA1 homolog"/>
    <property type="match status" value="1"/>
</dbReference>
<dbReference type="Gene3D" id="3.40.50.300">
    <property type="entry name" value="P-loop containing nucleotide triphosphate hydrolases"/>
    <property type="match status" value="1"/>
</dbReference>
<dbReference type="HAMAP" id="MF_03112">
    <property type="entry name" value="Asna1_Get3"/>
    <property type="match status" value="1"/>
</dbReference>
<dbReference type="InterPro" id="IPR025723">
    <property type="entry name" value="Anion-transp_ATPase-like_dom"/>
</dbReference>
<dbReference type="InterPro" id="IPR016300">
    <property type="entry name" value="ATPase_ArsA/GET3"/>
</dbReference>
<dbReference type="InterPro" id="IPR027542">
    <property type="entry name" value="ATPase_ArsA/GET3_euk"/>
</dbReference>
<dbReference type="InterPro" id="IPR027417">
    <property type="entry name" value="P-loop_NTPase"/>
</dbReference>
<dbReference type="NCBIfam" id="TIGR00345">
    <property type="entry name" value="GET3_arsA_TRC40"/>
    <property type="match status" value="1"/>
</dbReference>
<dbReference type="PANTHER" id="PTHR10803">
    <property type="entry name" value="ARSENICAL PUMP-DRIVING ATPASE ARSENITE-TRANSLOCATING ATPASE"/>
    <property type="match status" value="1"/>
</dbReference>
<dbReference type="PANTHER" id="PTHR10803:SF3">
    <property type="entry name" value="ATPASE GET3"/>
    <property type="match status" value="1"/>
</dbReference>
<dbReference type="Pfam" id="PF02374">
    <property type="entry name" value="ArsA_ATPase"/>
    <property type="match status" value="1"/>
</dbReference>
<dbReference type="SUPFAM" id="SSF52540">
    <property type="entry name" value="P-loop containing nucleoside triphosphate hydrolases"/>
    <property type="match status" value="1"/>
</dbReference>
<name>ASNA2_PARTE</name>
<comment type="function">
    <text evidence="1">ATPase required for the post-translational delivery of tail-anchored (TA) proteins to the endoplasmic reticulum. Recognizes and selectively binds the transmembrane domain of TA proteins in the cytosol. This complex then targets to the endoplasmic reticulum by membrane-bound receptors, where the tail-anchored protein is released for insertion. This process is regulated by ATP binding and hydrolysis. ATP binding drives the homodimer towards the closed dimer state, facilitating recognition of newly synthesized TA membrane proteins. ATP hydrolysis is required for insertion. Subsequently, the homodimer reverts towards the open dimer state, lowering its affinity for the membrane-bound receptor, and returning it to the cytosol to initiate a new round of targeting.</text>
</comment>
<comment type="subunit">
    <text evidence="1">Homodimer.</text>
</comment>
<comment type="subcellular location">
    <subcellularLocation>
        <location evidence="1">Cytoplasm</location>
    </subcellularLocation>
    <subcellularLocation>
        <location evidence="1">Endoplasmic reticulum</location>
    </subcellularLocation>
</comment>
<comment type="similarity">
    <text evidence="1">Belongs to the arsA ATPase family.</text>
</comment>
<reference key="1">
    <citation type="journal article" date="2006" name="Nature">
        <title>Global trends of whole-genome duplications revealed by the ciliate Paramecium tetraurelia.</title>
        <authorList>
            <person name="Aury J.-M."/>
            <person name="Jaillon O."/>
            <person name="Duret L."/>
            <person name="Noel B."/>
            <person name="Jubin C."/>
            <person name="Porcel B.M."/>
            <person name="Segurens B."/>
            <person name="Daubin V."/>
            <person name="Anthouard V."/>
            <person name="Aiach N."/>
            <person name="Arnaiz O."/>
            <person name="Billaut A."/>
            <person name="Beisson J."/>
            <person name="Blanc I."/>
            <person name="Bouhouche K."/>
            <person name="Camara F."/>
            <person name="Duharcourt S."/>
            <person name="Guigo R."/>
            <person name="Gogendeau D."/>
            <person name="Katinka M."/>
            <person name="Keller A.-M."/>
            <person name="Kissmehl R."/>
            <person name="Klotz C."/>
            <person name="Koll F."/>
            <person name="Le Mouel A."/>
            <person name="Lepere G."/>
            <person name="Malinsky S."/>
            <person name="Nowacki M."/>
            <person name="Nowak J.K."/>
            <person name="Plattner H."/>
            <person name="Poulain J."/>
            <person name="Ruiz F."/>
            <person name="Serrano V."/>
            <person name="Zagulski M."/>
            <person name="Dessen P."/>
            <person name="Betermier M."/>
            <person name="Weissenbach J."/>
            <person name="Scarpelli C."/>
            <person name="Schaechter V."/>
            <person name="Sperling L."/>
            <person name="Meyer E."/>
            <person name="Cohen J."/>
            <person name="Wincker P."/>
        </authorList>
    </citation>
    <scope>NUCLEOTIDE SEQUENCE [LARGE SCALE GENOMIC DNA]</scope>
    <source>
        <strain>Stock d4-2</strain>
    </source>
</reference>
<protein>
    <recommendedName>
        <fullName evidence="1">ATPase ASNA1 homolog 2</fullName>
        <ecNumber evidence="1">3.6.-.-</ecNumber>
    </recommendedName>
    <alternativeName>
        <fullName evidence="1">Arsenical pump-driving ATPase homolog 2</fullName>
    </alternativeName>
    <alternativeName>
        <fullName evidence="1">Arsenite-stimulated ATPase 2</fullName>
    </alternativeName>
</protein>
<gene>
    <name type="ORF">GSPATT00023900001</name>
</gene>
<feature type="chain" id="PRO_0000388168" description="ATPase ASNA1 homolog 2">
    <location>
        <begin position="1"/>
        <end position="325"/>
    </location>
</feature>
<feature type="active site" evidence="1">
    <location>
        <position position="51"/>
    </location>
</feature>
<feature type="binding site" evidence="1">
    <location>
        <begin position="22"/>
        <end position="29"/>
    </location>
    <ligand>
        <name>ATP</name>
        <dbReference type="ChEBI" id="CHEBI:30616"/>
    </ligand>
</feature>
<feature type="binding site" evidence="1">
    <location>
        <position position="231"/>
    </location>
    <ligand>
        <name>ATP</name>
        <dbReference type="ChEBI" id="CHEBI:30616"/>
    </ligand>
</feature>
<feature type="binding site" evidence="1">
    <location>
        <position position="258"/>
    </location>
    <ligand>
        <name>ATP</name>
        <dbReference type="ChEBI" id="CHEBI:30616"/>
    </ligand>
</feature>
<feature type="binding site" evidence="1">
    <location>
        <position position="267"/>
    </location>
    <ligand>
        <name>Zn(2+)</name>
        <dbReference type="ChEBI" id="CHEBI:29105"/>
        <note>ligand shared between dimeric partners</note>
    </ligand>
</feature>
<feature type="binding site" evidence="1">
    <location>
        <position position="270"/>
    </location>
    <ligand>
        <name>Zn(2+)</name>
        <dbReference type="ChEBI" id="CHEBI:29105"/>
        <note>ligand shared between dimeric partners</note>
    </ligand>
</feature>
<keyword id="KW-0067">ATP-binding</keyword>
<keyword id="KW-0963">Cytoplasm</keyword>
<keyword id="KW-0256">Endoplasmic reticulum</keyword>
<keyword id="KW-0378">Hydrolase</keyword>
<keyword id="KW-0479">Metal-binding</keyword>
<keyword id="KW-0547">Nucleotide-binding</keyword>
<keyword id="KW-1185">Reference proteome</keyword>
<keyword id="KW-0813">Transport</keyword>
<keyword id="KW-0862">Zinc</keyword>
<evidence type="ECO:0000255" key="1">
    <source>
        <dbReference type="HAMAP-Rule" id="MF_03112"/>
    </source>
</evidence>
<proteinExistence type="inferred from homology"/>
<accession>A0E7A5</accession>